<name>AROA_STAA3</name>
<evidence type="ECO:0000255" key="1">
    <source>
        <dbReference type="HAMAP-Rule" id="MF_00210"/>
    </source>
</evidence>
<protein>
    <recommendedName>
        <fullName evidence="1">3-phosphoshikimate 1-carboxyvinyltransferase</fullName>
        <ecNumber evidence="1">2.5.1.19</ecNumber>
    </recommendedName>
    <alternativeName>
        <fullName evidence="1">5-enolpyruvylshikimate-3-phosphate synthase</fullName>
        <shortName evidence="1">EPSP synthase</shortName>
        <shortName evidence="1">EPSPS</shortName>
    </alternativeName>
</protein>
<sequence>MVNEQIIDISGPLKGEIEVPGDKSMTHRAIMLASLAEGVSTIYKPLLGEDCRRTMDIFRLLGVEIKEDDEKLVVTSPGYQSFNTPHQVLYTGNSGTTTRLLAGLLSGLGIESVLSGDVSIGKRPMDRVLRPLKLMDANIEGIEDNYTPLIIKPSVIKGINYQMEVASAQVKSAILFASLFSKEPTIIKELDVSRNHTETMFKHFNIPIEAEGLSINTTPEAIRYIKPADFHVPGDISSAAFFIVAALITPGSDVTIHNVGINPTRSGIIDIVEKMGGNIQLFNQTTGAEPTASIRIQYTPMLQPITIEGELVPKAIDELPVIALLCTQAVGTSTIKDAEELKVKETNRIDTTADMLNLLGFELQPTNDGLIIHPSEFKTNATVDSLTDHRIGMMLAVASLLSSEPVKIKQFDAVNVSFPGFLPKLKLLENEG</sequence>
<reference key="1">
    <citation type="journal article" date="2006" name="Lancet">
        <title>Complete genome sequence of USA300, an epidemic clone of community-acquired meticillin-resistant Staphylococcus aureus.</title>
        <authorList>
            <person name="Diep B.A."/>
            <person name="Gill S.R."/>
            <person name="Chang R.F."/>
            <person name="Phan T.H."/>
            <person name="Chen J.H."/>
            <person name="Davidson M.G."/>
            <person name="Lin F."/>
            <person name="Lin J."/>
            <person name="Carleton H.A."/>
            <person name="Mongodin E.F."/>
            <person name="Sensabaugh G.F."/>
            <person name="Perdreau-Remington F."/>
        </authorList>
    </citation>
    <scope>NUCLEOTIDE SEQUENCE [LARGE SCALE GENOMIC DNA]</scope>
    <source>
        <strain>USA300</strain>
    </source>
</reference>
<accession>Q2FGX6</accession>
<dbReference type="EC" id="2.5.1.19" evidence="1"/>
<dbReference type="EMBL" id="CP000255">
    <property type="protein sequence ID" value="ABD20414.1"/>
    <property type="molecule type" value="Genomic_DNA"/>
</dbReference>
<dbReference type="RefSeq" id="WP_000245895.1">
    <property type="nucleotide sequence ID" value="NZ_CP027476.1"/>
</dbReference>
<dbReference type="SMR" id="Q2FGX6"/>
<dbReference type="KEGG" id="saa:SAUSA300_1355"/>
<dbReference type="HOGENOM" id="CLU_024321_0_1_9"/>
<dbReference type="OMA" id="YEDHRMA"/>
<dbReference type="UniPathway" id="UPA00053">
    <property type="reaction ID" value="UER00089"/>
</dbReference>
<dbReference type="Proteomes" id="UP000001939">
    <property type="component" value="Chromosome"/>
</dbReference>
<dbReference type="GO" id="GO:0005737">
    <property type="term" value="C:cytoplasm"/>
    <property type="evidence" value="ECO:0007669"/>
    <property type="project" value="UniProtKB-SubCell"/>
</dbReference>
<dbReference type="GO" id="GO:0003866">
    <property type="term" value="F:3-phosphoshikimate 1-carboxyvinyltransferase activity"/>
    <property type="evidence" value="ECO:0007669"/>
    <property type="project" value="UniProtKB-UniRule"/>
</dbReference>
<dbReference type="GO" id="GO:0008652">
    <property type="term" value="P:amino acid biosynthetic process"/>
    <property type="evidence" value="ECO:0007669"/>
    <property type="project" value="UniProtKB-KW"/>
</dbReference>
<dbReference type="GO" id="GO:0009073">
    <property type="term" value="P:aromatic amino acid family biosynthetic process"/>
    <property type="evidence" value="ECO:0007669"/>
    <property type="project" value="UniProtKB-KW"/>
</dbReference>
<dbReference type="GO" id="GO:0009423">
    <property type="term" value="P:chorismate biosynthetic process"/>
    <property type="evidence" value="ECO:0007669"/>
    <property type="project" value="UniProtKB-UniRule"/>
</dbReference>
<dbReference type="CDD" id="cd01556">
    <property type="entry name" value="EPSP_synthase"/>
    <property type="match status" value="1"/>
</dbReference>
<dbReference type="FunFam" id="3.65.10.10:FF:000005">
    <property type="entry name" value="3-phosphoshikimate 1-carboxyvinyltransferase"/>
    <property type="match status" value="1"/>
</dbReference>
<dbReference type="FunFam" id="3.65.10.10:FF:000006">
    <property type="entry name" value="3-phosphoshikimate 1-carboxyvinyltransferase"/>
    <property type="match status" value="1"/>
</dbReference>
<dbReference type="Gene3D" id="3.65.10.10">
    <property type="entry name" value="Enolpyruvate transferase domain"/>
    <property type="match status" value="2"/>
</dbReference>
<dbReference type="HAMAP" id="MF_00210">
    <property type="entry name" value="EPSP_synth"/>
    <property type="match status" value="1"/>
</dbReference>
<dbReference type="InterPro" id="IPR001986">
    <property type="entry name" value="Enolpyruvate_Tfrase_dom"/>
</dbReference>
<dbReference type="InterPro" id="IPR036968">
    <property type="entry name" value="Enolpyruvate_Tfrase_sf"/>
</dbReference>
<dbReference type="InterPro" id="IPR006264">
    <property type="entry name" value="EPSP_synthase"/>
</dbReference>
<dbReference type="InterPro" id="IPR023193">
    <property type="entry name" value="EPSP_synthase_CS"/>
</dbReference>
<dbReference type="InterPro" id="IPR013792">
    <property type="entry name" value="RNA3'P_cycl/enolpyr_Trfase_a/b"/>
</dbReference>
<dbReference type="NCBIfam" id="TIGR01356">
    <property type="entry name" value="aroA"/>
    <property type="match status" value="1"/>
</dbReference>
<dbReference type="PANTHER" id="PTHR21090">
    <property type="entry name" value="AROM/DEHYDROQUINATE SYNTHASE"/>
    <property type="match status" value="1"/>
</dbReference>
<dbReference type="PANTHER" id="PTHR21090:SF5">
    <property type="entry name" value="PENTAFUNCTIONAL AROM POLYPEPTIDE"/>
    <property type="match status" value="1"/>
</dbReference>
<dbReference type="Pfam" id="PF00275">
    <property type="entry name" value="EPSP_synthase"/>
    <property type="match status" value="1"/>
</dbReference>
<dbReference type="PIRSF" id="PIRSF000505">
    <property type="entry name" value="EPSPS"/>
    <property type="match status" value="1"/>
</dbReference>
<dbReference type="SUPFAM" id="SSF55205">
    <property type="entry name" value="EPT/RTPC-like"/>
    <property type="match status" value="1"/>
</dbReference>
<dbReference type="PROSITE" id="PS00104">
    <property type="entry name" value="EPSP_SYNTHASE_1"/>
    <property type="match status" value="1"/>
</dbReference>
<dbReference type="PROSITE" id="PS00885">
    <property type="entry name" value="EPSP_SYNTHASE_2"/>
    <property type="match status" value="1"/>
</dbReference>
<keyword id="KW-0028">Amino-acid biosynthesis</keyword>
<keyword id="KW-0057">Aromatic amino acid biosynthesis</keyword>
<keyword id="KW-0963">Cytoplasm</keyword>
<keyword id="KW-0808">Transferase</keyword>
<feature type="chain" id="PRO_1000012485" description="3-phosphoshikimate 1-carboxyvinyltransferase">
    <location>
        <begin position="1"/>
        <end position="432"/>
    </location>
</feature>
<feature type="active site" description="Proton acceptor" evidence="1">
    <location>
        <position position="317"/>
    </location>
</feature>
<feature type="binding site" evidence="1">
    <location>
        <position position="23"/>
    </location>
    <ligand>
        <name>3-phosphoshikimate</name>
        <dbReference type="ChEBI" id="CHEBI:145989"/>
    </ligand>
</feature>
<feature type="binding site" evidence="1">
    <location>
        <position position="23"/>
    </location>
    <ligand>
        <name>phosphoenolpyruvate</name>
        <dbReference type="ChEBI" id="CHEBI:58702"/>
    </ligand>
</feature>
<feature type="binding site" evidence="1">
    <location>
        <position position="24"/>
    </location>
    <ligand>
        <name>3-phosphoshikimate</name>
        <dbReference type="ChEBI" id="CHEBI:145989"/>
    </ligand>
</feature>
<feature type="binding site" evidence="1">
    <location>
        <position position="28"/>
    </location>
    <ligand>
        <name>3-phosphoshikimate</name>
        <dbReference type="ChEBI" id="CHEBI:145989"/>
    </ligand>
</feature>
<feature type="binding site" evidence="1">
    <location>
        <position position="95"/>
    </location>
    <ligand>
        <name>phosphoenolpyruvate</name>
        <dbReference type="ChEBI" id="CHEBI:58702"/>
    </ligand>
</feature>
<feature type="binding site" evidence="1">
    <location>
        <position position="123"/>
    </location>
    <ligand>
        <name>phosphoenolpyruvate</name>
        <dbReference type="ChEBI" id="CHEBI:58702"/>
    </ligand>
</feature>
<feature type="binding site" evidence="1">
    <location>
        <position position="167"/>
    </location>
    <ligand>
        <name>3-phosphoshikimate</name>
        <dbReference type="ChEBI" id="CHEBI:145989"/>
    </ligand>
</feature>
<feature type="binding site" evidence="1">
    <location>
        <position position="169"/>
    </location>
    <ligand>
        <name>3-phosphoshikimate</name>
        <dbReference type="ChEBI" id="CHEBI:145989"/>
    </ligand>
</feature>
<feature type="binding site" evidence="1">
    <location>
        <position position="169"/>
    </location>
    <ligand>
        <name>phosphoenolpyruvate</name>
        <dbReference type="ChEBI" id="CHEBI:58702"/>
    </ligand>
</feature>
<feature type="binding site" evidence="1">
    <location>
        <position position="317"/>
    </location>
    <ligand>
        <name>3-phosphoshikimate</name>
        <dbReference type="ChEBI" id="CHEBI:145989"/>
    </ligand>
</feature>
<feature type="binding site" evidence="1">
    <location>
        <position position="344"/>
    </location>
    <ligand>
        <name>3-phosphoshikimate</name>
        <dbReference type="ChEBI" id="CHEBI:145989"/>
    </ligand>
</feature>
<feature type="binding site" evidence="1">
    <location>
        <position position="348"/>
    </location>
    <ligand>
        <name>phosphoenolpyruvate</name>
        <dbReference type="ChEBI" id="CHEBI:58702"/>
    </ligand>
</feature>
<feature type="binding site" evidence="1">
    <location>
        <position position="390"/>
    </location>
    <ligand>
        <name>phosphoenolpyruvate</name>
        <dbReference type="ChEBI" id="CHEBI:58702"/>
    </ligand>
</feature>
<gene>
    <name evidence="1" type="primary">aroA</name>
    <name type="ordered locus">SAUSA300_1355</name>
</gene>
<comment type="function">
    <text evidence="1">Catalyzes the transfer of the enolpyruvyl moiety of phosphoenolpyruvate (PEP) to the 5-hydroxyl of shikimate-3-phosphate (S3P) to produce enolpyruvyl shikimate-3-phosphate and inorganic phosphate.</text>
</comment>
<comment type="catalytic activity">
    <reaction evidence="1">
        <text>3-phosphoshikimate + phosphoenolpyruvate = 5-O-(1-carboxyvinyl)-3-phosphoshikimate + phosphate</text>
        <dbReference type="Rhea" id="RHEA:21256"/>
        <dbReference type="ChEBI" id="CHEBI:43474"/>
        <dbReference type="ChEBI" id="CHEBI:57701"/>
        <dbReference type="ChEBI" id="CHEBI:58702"/>
        <dbReference type="ChEBI" id="CHEBI:145989"/>
        <dbReference type="EC" id="2.5.1.19"/>
    </reaction>
    <physiologicalReaction direction="left-to-right" evidence="1">
        <dbReference type="Rhea" id="RHEA:21257"/>
    </physiologicalReaction>
</comment>
<comment type="pathway">
    <text evidence="1">Metabolic intermediate biosynthesis; chorismate biosynthesis; chorismate from D-erythrose 4-phosphate and phosphoenolpyruvate: step 6/7.</text>
</comment>
<comment type="subunit">
    <text evidence="1">Monomer.</text>
</comment>
<comment type="subcellular location">
    <subcellularLocation>
        <location evidence="1">Cytoplasm</location>
    </subcellularLocation>
</comment>
<comment type="similarity">
    <text evidence="1">Belongs to the EPSP synthase family.</text>
</comment>
<proteinExistence type="inferred from homology"/>
<organism>
    <name type="scientific">Staphylococcus aureus (strain USA300)</name>
    <dbReference type="NCBI Taxonomy" id="367830"/>
    <lineage>
        <taxon>Bacteria</taxon>
        <taxon>Bacillati</taxon>
        <taxon>Bacillota</taxon>
        <taxon>Bacilli</taxon>
        <taxon>Bacillales</taxon>
        <taxon>Staphylococcaceae</taxon>
        <taxon>Staphylococcus</taxon>
    </lineage>
</organism>